<accession>B1ZKG7</accession>
<protein>
    <recommendedName>
        <fullName evidence="1">FMN-dependent NADH:quinone oxidoreductase</fullName>
        <ecNumber evidence="1">1.6.5.-</ecNumber>
    </recommendedName>
    <alternativeName>
        <fullName evidence="1">Azo-dye reductase</fullName>
    </alternativeName>
    <alternativeName>
        <fullName evidence="1">FMN-dependent NADH-azo compound oxidoreductase</fullName>
    </alternativeName>
    <alternativeName>
        <fullName evidence="1">FMN-dependent NADH-azoreductase</fullName>
        <ecNumber evidence="1">1.7.1.17</ecNumber>
    </alternativeName>
</protein>
<dbReference type="EC" id="1.6.5.-" evidence="1"/>
<dbReference type="EC" id="1.7.1.17" evidence="1"/>
<dbReference type="EMBL" id="CP001029">
    <property type="protein sequence ID" value="ACB80159.1"/>
    <property type="molecule type" value="Genomic_DNA"/>
</dbReference>
<dbReference type="RefSeq" id="WP_012453903.1">
    <property type="nucleotide sequence ID" value="NC_010725.1"/>
</dbReference>
<dbReference type="SMR" id="B1ZKG7"/>
<dbReference type="STRING" id="441620.Mpop_1996"/>
<dbReference type="KEGG" id="mpo:Mpop_1996"/>
<dbReference type="eggNOG" id="COG1182">
    <property type="taxonomic scope" value="Bacteria"/>
</dbReference>
<dbReference type="HOGENOM" id="CLU_088964_0_0_5"/>
<dbReference type="OrthoDB" id="9787136at2"/>
<dbReference type="Proteomes" id="UP000007136">
    <property type="component" value="Chromosome"/>
</dbReference>
<dbReference type="GO" id="GO:0009055">
    <property type="term" value="F:electron transfer activity"/>
    <property type="evidence" value="ECO:0007669"/>
    <property type="project" value="UniProtKB-UniRule"/>
</dbReference>
<dbReference type="GO" id="GO:0010181">
    <property type="term" value="F:FMN binding"/>
    <property type="evidence" value="ECO:0007669"/>
    <property type="project" value="UniProtKB-UniRule"/>
</dbReference>
<dbReference type="GO" id="GO:0016652">
    <property type="term" value="F:oxidoreductase activity, acting on NAD(P)H as acceptor"/>
    <property type="evidence" value="ECO:0007669"/>
    <property type="project" value="UniProtKB-UniRule"/>
</dbReference>
<dbReference type="GO" id="GO:0016655">
    <property type="term" value="F:oxidoreductase activity, acting on NAD(P)H, quinone or similar compound as acceptor"/>
    <property type="evidence" value="ECO:0007669"/>
    <property type="project" value="InterPro"/>
</dbReference>
<dbReference type="Gene3D" id="3.40.50.360">
    <property type="match status" value="1"/>
</dbReference>
<dbReference type="HAMAP" id="MF_01216">
    <property type="entry name" value="Azoreductase_type1"/>
    <property type="match status" value="1"/>
</dbReference>
<dbReference type="InterPro" id="IPR003680">
    <property type="entry name" value="Flavodoxin_fold"/>
</dbReference>
<dbReference type="InterPro" id="IPR029039">
    <property type="entry name" value="Flavoprotein-like_sf"/>
</dbReference>
<dbReference type="InterPro" id="IPR050104">
    <property type="entry name" value="FMN-dep_NADH:Q_OxRdtase_AzoR1"/>
</dbReference>
<dbReference type="InterPro" id="IPR023048">
    <property type="entry name" value="NADH:quinone_OxRdtase_FMN_depd"/>
</dbReference>
<dbReference type="PANTHER" id="PTHR43741">
    <property type="entry name" value="FMN-DEPENDENT NADH-AZOREDUCTASE 1"/>
    <property type="match status" value="1"/>
</dbReference>
<dbReference type="PANTHER" id="PTHR43741:SF4">
    <property type="entry name" value="FMN-DEPENDENT NADH:QUINONE OXIDOREDUCTASE"/>
    <property type="match status" value="1"/>
</dbReference>
<dbReference type="Pfam" id="PF02525">
    <property type="entry name" value="Flavodoxin_2"/>
    <property type="match status" value="1"/>
</dbReference>
<dbReference type="SUPFAM" id="SSF52218">
    <property type="entry name" value="Flavoproteins"/>
    <property type="match status" value="1"/>
</dbReference>
<proteinExistence type="inferred from homology"/>
<sequence>MKLLHVDGSILGPHSVSRTVSAAIVDRLRAQHPDLDVAYRDLAQTPLPHLSGAVLAGAQPNATNAPDVQHDVDLGRQALDEFLAADVVVIGAPLYNFTLSSQLKAWIDRILVAGVTFRYGPSGAEGLAGGKRVIAVVSRGGLYGPGTPAAAAEHAETYLRTVLAFIGITAPEIIVAEGIALGPEARERALAGALDAAAALKAA</sequence>
<reference key="1">
    <citation type="submission" date="2008-04" db="EMBL/GenBank/DDBJ databases">
        <title>Complete sequence of chromosome of Methylobacterium populi BJ001.</title>
        <authorList>
            <consortium name="US DOE Joint Genome Institute"/>
            <person name="Copeland A."/>
            <person name="Lucas S."/>
            <person name="Lapidus A."/>
            <person name="Glavina del Rio T."/>
            <person name="Dalin E."/>
            <person name="Tice H."/>
            <person name="Bruce D."/>
            <person name="Goodwin L."/>
            <person name="Pitluck S."/>
            <person name="Chertkov O."/>
            <person name="Brettin T."/>
            <person name="Detter J.C."/>
            <person name="Han C."/>
            <person name="Kuske C.R."/>
            <person name="Schmutz J."/>
            <person name="Larimer F."/>
            <person name="Land M."/>
            <person name="Hauser L."/>
            <person name="Kyrpides N."/>
            <person name="Mikhailova N."/>
            <person name="Marx C."/>
            <person name="Richardson P."/>
        </authorList>
    </citation>
    <scope>NUCLEOTIDE SEQUENCE [LARGE SCALE GENOMIC DNA]</scope>
    <source>
        <strain>ATCC BAA-705 / NCIMB 13946 / BJ001</strain>
    </source>
</reference>
<feature type="chain" id="PRO_1000138981" description="FMN-dependent NADH:quinone oxidoreductase">
    <location>
        <begin position="1"/>
        <end position="203"/>
    </location>
</feature>
<feature type="binding site" evidence="1">
    <location>
        <position position="9"/>
    </location>
    <ligand>
        <name>FMN</name>
        <dbReference type="ChEBI" id="CHEBI:58210"/>
    </ligand>
</feature>
<feature type="binding site" evidence="1">
    <location>
        <begin position="15"/>
        <end position="17"/>
    </location>
    <ligand>
        <name>FMN</name>
        <dbReference type="ChEBI" id="CHEBI:58210"/>
    </ligand>
</feature>
<feature type="binding site" evidence="1">
    <location>
        <begin position="138"/>
        <end position="141"/>
    </location>
    <ligand>
        <name>FMN</name>
        <dbReference type="ChEBI" id="CHEBI:58210"/>
    </ligand>
</feature>
<gene>
    <name evidence="1" type="primary">azoR</name>
    <name type="ordered locus">Mpop_1996</name>
</gene>
<name>AZOR_METPB</name>
<organism>
    <name type="scientific">Methylorubrum populi (strain ATCC BAA-705 / NCIMB 13946 / BJ001)</name>
    <name type="common">Methylobacterium populi</name>
    <dbReference type="NCBI Taxonomy" id="441620"/>
    <lineage>
        <taxon>Bacteria</taxon>
        <taxon>Pseudomonadati</taxon>
        <taxon>Pseudomonadota</taxon>
        <taxon>Alphaproteobacteria</taxon>
        <taxon>Hyphomicrobiales</taxon>
        <taxon>Methylobacteriaceae</taxon>
        <taxon>Methylorubrum</taxon>
    </lineage>
</organism>
<comment type="function">
    <text evidence="1">Quinone reductase that provides resistance to thiol-specific stress caused by electrophilic quinones.</text>
</comment>
<comment type="function">
    <text evidence="1">Also exhibits azoreductase activity. Catalyzes the reductive cleavage of the azo bond in aromatic azo compounds to the corresponding amines.</text>
</comment>
<comment type="catalytic activity">
    <reaction evidence="1">
        <text>2 a quinone + NADH + H(+) = 2 a 1,4-benzosemiquinone + NAD(+)</text>
        <dbReference type="Rhea" id="RHEA:65952"/>
        <dbReference type="ChEBI" id="CHEBI:15378"/>
        <dbReference type="ChEBI" id="CHEBI:57540"/>
        <dbReference type="ChEBI" id="CHEBI:57945"/>
        <dbReference type="ChEBI" id="CHEBI:132124"/>
        <dbReference type="ChEBI" id="CHEBI:134225"/>
    </reaction>
</comment>
<comment type="catalytic activity">
    <reaction evidence="1">
        <text>N,N-dimethyl-1,4-phenylenediamine + anthranilate + 2 NAD(+) = 2-(4-dimethylaminophenyl)diazenylbenzoate + 2 NADH + 2 H(+)</text>
        <dbReference type="Rhea" id="RHEA:55872"/>
        <dbReference type="ChEBI" id="CHEBI:15378"/>
        <dbReference type="ChEBI" id="CHEBI:15783"/>
        <dbReference type="ChEBI" id="CHEBI:16567"/>
        <dbReference type="ChEBI" id="CHEBI:57540"/>
        <dbReference type="ChEBI" id="CHEBI:57945"/>
        <dbReference type="ChEBI" id="CHEBI:71579"/>
        <dbReference type="EC" id="1.7.1.17"/>
    </reaction>
</comment>
<comment type="cofactor">
    <cofactor evidence="1">
        <name>FMN</name>
        <dbReference type="ChEBI" id="CHEBI:58210"/>
    </cofactor>
    <text evidence="1">Binds 1 FMN per subunit.</text>
</comment>
<comment type="subunit">
    <text evidence="1">Homodimer.</text>
</comment>
<comment type="similarity">
    <text evidence="1">Belongs to the azoreductase type 1 family.</text>
</comment>
<keyword id="KW-0285">Flavoprotein</keyword>
<keyword id="KW-0288">FMN</keyword>
<keyword id="KW-0520">NAD</keyword>
<keyword id="KW-0560">Oxidoreductase</keyword>
<evidence type="ECO:0000255" key="1">
    <source>
        <dbReference type="HAMAP-Rule" id="MF_01216"/>
    </source>
</evidence>